<reference key="1">
    <citation type="journal article" date="2008" name="Proc. Natl. Acad. Sci. U.S.A.">
        <title>Nitrogen fixation island and rhizosphere competence traits in the genome of root-associated Pseudomonas stutzeri A1501.</title>
        <authorList>
            <person name="Yan Y."/>
            <person name="Yang J."/>
            <person name="Dou Y."/>
            <person name="Chen M."/>
            <person name="Ping S."/>
            <person name="Peng J."/>
            <person name="Lu W."/>
            <person name="Zhang W."/>
            <person name="Yao Z."/>
            <person name="Li H."/>
            <person name="Liu W."/>
            <person name="He S."/>
            <person name="Geng L."/>
            <person name="Zhang X."/>
            <person name="Yang F."/>
            <person name="Yu H."/>
            <person name="Zhan Y."/>
            <person name="Li D."/>
            <person name="Lin Z."/>
            <person name="Wang Y."/>
            <person name="Elmerich C."/>
            <person name="Lin M."/>
            <person name="Jin Q."/>
        </authorList>
    </citation>
    <scope>NUCLEOTIDE SEQUENCE [LARGE SCALE GENOMIC DNA]</scope>
    <source>
        <strain>A1501</strain>
    </source>
</reference>
<feature type="chain" id="PRO_0000402698" description="Ureidoacrylate amidohydrolase RutB">
    <location>
        <begin position="1"/>
        <end position="248"/>
    </location>
</feature>
<feature type="active site" description="Proton acceptor" evidence="1">
    <location>
        <position position="41"/>
    </location>
</feature>
<feature type="active site" evidence="1">
    <location>
        <position position="150"/>
    </location>
</feature>
<feature type="active site" description="Nucleophile" evidence="1">
    <location>
        <position position="183"/>
    </location>
</feature>
<gene>
    <name evidence="1" type="primary">rutB</name>
    <name type="ordered locus">PST_3598</name>
</gene>
<protein>
    <recommendedName>
        <fullName evidence="1">Ureidoacrylate amidohydrolase RutB</fullName>
        <ecNumber evidence="1">3.5.1.110</ecNumber>
    </recommendedName>
</protein>
<comment type="function">
    <text evidence="1">Hydrolyzes ureidoacrylate to form aminoacrylate and carbamate. The carbamate hydrolyzes spontaneously, thereby releasing one of the nitrogen atoms of the pyrimidine ring as ammonia and one of its carbon atoms as CO2.</text>
</comment>
<comment type="catalytic activity">
    <reaction evidence="1">
        <text>(Z)-3-ureidoacrylate + H2O + H(+) = (Z)-3-aminoacrylate + NH4(+) + CO2</text>
        <dbReference type="Rhea" id="RHEA:42624"/>
        <dbReference type="ChEBI" id="CHEBI:15377"/>
        <dbReference type="ChEBI" id="CHEBI:15378"/>
        <dbReference type="ChEBI" id="CHEBI:16526"/>
        <dbReference type="ChEBI" id="CHEBI:28938"/>
        <dbReference type="ChEBI" id="CHEBI:59891"/>
        <dbReference type="ChEBI" id="CHEBI:59894"/>
        <dbReference type="EC" id="3.5.1.110"/>
    </reaction>
</comment>
<comment type="catalytic activity">
    <reaction evidence="1">
        <text>(Z)-3-ureidoacrylate + H2O = (Z)-3-aminoacrylate + carbamate + H(+)</text>
        <dbReference type="Rhea" id="RHEA:31603"/>
        <dbReference type="ChEBI" id="CHEBI:13941"/>
        <dbReference type="ChEBI" id="CHEBI:15377"/>
        <dbReference type="ChEBI" id="CHEBI:15378"/>
        <dbReference type="ChEBI" id="CHEBI:59891"/>
        <dbReference type="ChEBI" id="CHEBI:59894"/>
    </reaction>
</comment>
<comment type="catalytic activity">
    <reaction evidence="1">
        <text>(Z)-2-methylureidoacrylate + H2O + H(+) = (Z)-2-methylaminoacrylate + NH4(+) + CO2</text>
        <dbReference type="Rhea" id="RHEA:42620"/>
        <dbReference type="ChEBI" id="CHEBI:15377"/>
        <dbReference type="ChEBI" id="CHEBI:15378"/>
        <dbReference type="ChEBI" id="CHEBI:16526"/>
        <dbReference type="ChEBI" id="CHEBI:28938"/>
        <dbReference type="ChEBI" id="CHEBI:143783"/>
        <dbReference type="ChEBI" id="CHEBI:145735"/>
        <dbReference type="EC" id="3.5.1.110"/>
    </reaction>
</comment>
<comment type="similarity">
    <text evidence="1">Belongs to the isochorismatase family. RutB subfamily.</text>
</comment>
<accession>A4VQH5</accession>
<dbReference type="EC" id="3.5.1.110" evidence="1"/>
<dbReference type="EMBL" id="CP000304">
    <property type="protein sequence ID" value="ABP81226.1"/>
    <property type="molecule type" value="Genomic_DNA"/>
</dbReference>
<dbReference type="RefSeq" id="WP_011914620.1">
    <property type="nucleotide sequence ID" value="NC_009434.1"/>
</dbReference>
<dbReference type="SMR" id="A4VQH5"/>
<dbReference type="KEGG" id="psa:PST_3598"/>
<dbReference type="eggNOG" id="COG1335">
    <property type="taxonomic scope" value="Bacteria"/>
</dbReference>
<dbReference type="HOGENOM" id="CLU_068979_8_0_6"/>
<dbReference type="Proteomes" id="UP000000233">
    <property type="component" value="Chromosome"/>
</dbReference>
<dbReference type="GO" id="GO:0016811">
    <property type="term" value="F:hydrolase activity, acting on carbon-nitrogen (but not peptide) bonds, in linear amides"/>
    <property type="evidence" value="ECO:0007669"/>
    <property type="project" value="UniProtKB-UniRule"/>
</dbReference>
<dbReference type="GO" id="GO:0019740">
    <property type="term" value="P:nitrogen utilization"/>
    <property type="evidence" value="ECO:0007669"/>
    <property type="project" value="UniProtKB-UniRule"/>
</dbReference>
<dbReference type="GO" id="GO:0006212">
    <property type="term" value="P:uracil catabolic process"/>
    <property type="evidence" value="ECO:0007669"/>
    <property type="project" value="UniProtKB-UniRule"/>
</dbReference>
<dbReference type="CDD" id="cd00431">
    <property type="entry name" value="cysteine_hydrolases"/>
    <property type="match status" value="1"/>
</dbReference>
<dbReference type="Gene3D" id="3.40.50.850">
    <property type="entry name" value="Isochorismatase-like"/>
    <property type="match status" value="1"/>
</dbReference>
<dbReference type="HAMAP" id="MF_00830">
    <property type="entry name" value="RutB"/>
    <property type="match status" value="1"/>
</dbReference>
<dbReference type="InterPro" id="IPR000868">
    <property type="entry name" value="Isochorismatase-like_dom"/>
</dbReference>
<dbReference type="InterPro" id="IPR050272">
    <property type="entry name" value="Isochorismatase-like_hydrls"/>
</dbReference>
<dbReference type="InterPro" id="IPR036380">
    <property type="entry name" value="Isochorismatase-like_sf"/>
</dbReference>
<dbReference type="InterPro" id="IPR019916">
    <property type="entry name" value="RutB"/>
</dbReference>
<dbReference type="NCBIfam" id="TIGR03614">
    <property type="entry name" value="RutB"/>
    <property type="match status" value="1"/>
</dbReference>
<dbReference type="PANTHER" id="PTHR43540:SF6">
    <property type="entry name" value="ISOCHORISMATASE-LIKE DOMAIN-CONTAINING PROTEIN"/>
    <property type="match status" value="1"/>
</dbReference>
<dbReference type="PANTHER" id="PTHR43540">
    <property type="entry name" value="PEROXYUREIDOACRYLATE/UREIDOACRYLATE AMIDOHYDROLASE-RELATED"/>
    <property type="match status" value="1"/>
</dbReference>
<dbReference type="Pfam" id="PF00857">
    <property type="entry name" value="Isochorismatase"/>
    <property type="match status" value="1"/>
</dbReference>
<dbReference type="SUPFAM" id="SSF52499">
    <property type="entry name" value="Isochorismatase-like hydrolases"/>
    <property type="match status" value="1"/>
</dbReference>
<evidence type="ECO:0000255" key="1">
    <source>
        <dbReference type="HAMAP-Rule" id="MF_00830"/>
    </source>
</evidence>
<keyword id="KW-0378">Hydrolase</keyword>
<keyword id="KW-1185">Reference proteome</keyword>
<proteinExistence type="inferred from homology"/>
<organism>
    <name type="scientific">Stutzerimonas stutzeri (strain A1501)</name>
    <name type="common">Pseudomonas stutzeri</name>
    <dbReference type="NCBI Taxonomy" id="379731"/>
    <lineage>
        <taxon>Bacteria</taxon>
        <taxon>Pseudomonadati</taxon>
        <taxon>Pseudomonadota</taxon>
        <taxon>Gammaproteobacteria</taxon>
        <taxon>Pseudomonadales</taxon>
        <taxon>Pseudomonadaceae</taxon>
        <taxon>Stutzerimonas</taxon>
    </lineage>
</organism>
<name>RUTB_STUS1</name>
<sequence length="248" mass="26558">MNAVEQISGYGLSATDEPVQLPARPEPLAMKASETALIVVDMQNAYASRGGYLDLAGFDVSATQPVIAKIRQALNAARAAGMQVIFLQNGWDNGYVEAGGPGSPNWHKSNALKTMRKRPELAGTLLAKGGWDYALVDELAPQPGDILVPKPRYSGFFNSQLDSTLRARGIRNLVFTGIATNVCVESTLRDGFHLEYFGVVLADATHQAGPEFAQQAALYNIETFFGWVSSVDAFCQSFAAAPEVAVAS</sequence>